<evidence type="ECO:0000255" key="1">
    <source>
        <dbReference type="HAMAP-Rule" id="MF_01445"/>
    </source>
</evidence>
<comment type="function">
    <text evidence="1">Required for the formation of a threonylcarbamoyl group on adenosine at position 37 (t(6)A37) in tRNAs that read codons beginning with adenine. Is involved in the transfer of the threonylcarbamoyl moiety of threonylcarbamoyl-AMP (TC-AMP) to the N6 group of A37, together with TsaE and TsaB. TsaD likely plays a direct catalytic role in this reaction.</text>
</comment>
<comment type="catalytic activity">
    <reaction evidence="1">
        <text>L-threonylcarbamoyladenylate + adenosine(37) in tRNA = N(6)-L-threonylcarbamoyladenosine(37) in tRNA + AMP + H(+)</text>
        <dbReference type="Rhea" id="RHEA:37059"/>
        <dbReference type="Rhea" id="RHEA-COMP:10162"/>
        <dbReference type="Rhea" id="RHEA-COMP:10163"/>
        <dbReference type="ChEBI" id="CHEBI:15378"/>
        <dbReference type="ChEBI" id="CHEBI:73682"/>
        <dbReference type="ChEBI" id="CHEBI:74411"/>
        <dbReference type="ChEBI" id="CHEBI:74418"/>
        <dbReference type="ChEBI" id="CHEBI:456215"/>
        <dbReference type="EC" id="2.3.1.234"/>
    </reaction>
</comment>
<comment type="cofactor">
    <cofactor evidence="1">
        <name>Fe(2+)</name>
        <dbReference type="ChEBI" id="CHEBI:29033"/>
    </cofactor>
    <text evidence="1">Binds 1 Fe(2+) ion per subunit.</text>
</comment>
<comment type="subcellular location">
    <subcellularLocation>
        <location evidence="1">Cytoplasm</location>
    </subcellularLocation>
</comment>
<comment type="similarity">
    <text evidence="1">Belongs to the KAE1 / TsaD family.</text>
</comment>
<keyword id="KW-0012">Acyltransferase</keyword>
<keyword id="KW-0963">Cytoplasm</keyword>
<keyword id="KW-0408">Iron</keyword>
<keyword id="KW-0479">Metal-binding</keyword>
<keyword id="KW-0808">Transferase</keyword>
<keyword id="KW-0819">tRNA processing</keyword>
<sequence length="337" mass="36041">MRVLGIETSCDETGIAVYDDKAGLLANQLYSQVKLHADYGGVVPELASRDHVRKTVPLIQAALKEANLSAKDIDAVAYTAGPGLVGALLVGATIGRALAFAWGVPAVPVHHMEGHLLAPMLEENAPEFPFVALLVSGGHTQLISVTGIGEYLLLGESVDDAAGEAFDKTAKLLGLDYPGGPMLSRMAQQGTVGRFTFPRPMTDRPGLDFSFSGLKTFAANTIRANGDDDQTRADIARAFEDAVVDTLAIKSKRALDQTGFKRLVIAGGVSANQTLRLKLADMMQKRGGEVFYARPEFCTDNGAMIAYAGMVRLRSNLNSELSVSVRPRWPLSELPKV</sequence>
<accession>B1JM18</accession>
<feature type="chain" id="PRO_1000146048" description="tRNA N6-adenosine threonylcarbamoyltransferase">
    <location>
        <begin position="1"/>
        <end position="337"/>
    </location>
</feature>
<feature type="binding site" evidence="1">
    <location>
        <position position="111"/>
    </location>
    <ligand>
        <name>Fe cation</name>
        <dbReference type="ChEBI" id="CHEBI:24875"/>
    </ligand>
</feature>
<feature type="binding site" evidence="1">
    <location>
        <position position="115"/>
    </location>
    <ligand>
        <name>Fe cation</name>
        <dbReference type="ChEBI" id="CHEBI:24875"/>
    </ligand>
</feature>
<feature type="binding site" evidence="1">
    <location>
        <begin position="134"/>
        <end position="138"/>
    </location>
    <ligand>
        <name>substrate</name>
    </ligand>
</feature>
<feature type="binding site" evidence="1">
    <location>
        <position position="167"/>
    </location>
    <ligand>
        <name>substrate</name>
    </ligand>
</feature>
<feature type="binding site" evidence="1">
    <location>
        <position position="180"/>
    </location>
    <ligand>
        <name>substrate</name>
    </ligand>
</feature>
<feature type="binding site" evidence="1">
    <location>
        <position position="272"/>
    </location>
    <ligand>
        <name>substrate</name>
    </ligand>
</feature>
<feature type="binding site" evidence="1">
    <location>
        <position position="300"/>
    </location>
    <ligand>
        <name>Fe cation</name>
        <dbReference type="ChEBI" id="CHEBI:24875"/>
    </ligand>
</feature>
<dbReference type="EC" id="2.3.1.234" evidence="1"/>
<dbReference type="EMBL" id="CP000950">
    <property type="protein sequence ID" value="ACA66940.1"/>
    <property type="molecule type" value="Genomic_DNA"/>
</dbReference>
<dbReference type="RefSeq" id="WP_002212201.1">
    <property type="nucleotide sequence ID" value="NZ_CP009792.1"/>
</dbReference>
<dbReference type="SMR" id="B1JM18"/>
<dbReference type="GeneID" id="57973978"/>
<dbReference type="KEGG" id="ypy:YPK_0637"/>
<dbReference type="PATRIC" id="fig|502800.11.peg.1254"/>
<dbReference type="GO" id="GO:0005737">
    <property type="term" value="C:cytoplasm"/>
    <property type="evidence" value="ECO:0007669"/>
    <property type="project" value="UniProtKB-SubCell"/>
</dbReference>
<dbReference type="GO" id="GO:0005506">
    <property type="term" value="F:iron ion binding"/>
    <property type="evidence" value="ECO:0007669"/>
    <property type="project" value="UniProtKB-UniRule"/>
</dbReference>
<dbReference type="GO" id="GO:0061711">
    <property type="term" value="F:N(6)-L-threonylcarbamoyladenine synthase activity"/>
    <property type="evidence" value="ECO:0007669"/>
    <property type="project" value="UniProtKB-EC"/>
</dbReference>
<dbReference type="GO" id="GO:0002949">
    <property type="term" value="P:tRNA threonylcarbamoyladenosine modification"/>
    <property type="evidence" value="ECO:0007669"/>
    <property type="project" value="UniProtKB-UniRule"/>
</dbReference>
<dbReference type="CDD" id="cd24133">
    <property type="entry name" value="ASKHA_NBD_TsaD_bac"/>
    <property type="match status" value="1"/>
</dbReference>
<dbReference type="FunFam" id="3.30.420.40:FF:000031">
    <property type="entry name" value="tRNA N6-adenosine threonylcarbamoyltransferase"/>
    <property type="match status" value="1"/>
</dbReference>
<dbReference type="Gene3D" id="3.30.420.40">
    <property type="match status" value="2"/>
</dbReference>
<dbReference type="HAMAP" id="MF_01445">
    <property type="entry name" value="TsaD"/>
    <property type="match status" value="1"/>
</dbReference>
<dbReference type="InterPro" id="IPR043129">
    <property type="entry name" value="ATPase_NBD"/>
</dbReference>
<dbReference type="InterPro" id="IPR000905">
    <property type="entry name" value="Gcp-like_dom"/>
</dbReference>
<dbReference type="InterPro" id="IPR017861">
    <property type="entry name" value="KAE1/TsaD"/>
</dbReference>
<dbReference type="InterPro" id="IPR017860">
    <property type="entry name" value="Peptidase_M22_CS"/>
</dbReference>
<dbReference type="InterPro" id="IPR022450">
    <property type="entry name" value="TsaD"/>
</dbReference>
<dbReference type="NCBIfam" id="TIGR00329">
    <property type="entry name" value="gcp_kae1"/>
    <property type="match status" value="1"/>
</dbReference>
<dbReference type="NCBIfam" id="TIGR03723">
    <property type="entry name" value="T6A_TsaD_YgjD"/>
    <property type="match status" value="1"/>
</dbReference>
<dbReference type="PANTHER" id="PTHR11735">
    <property type="entry name" value="TRNA N6-ADENOSINE THREONYLCARBAMOYLTRANSFERASE"/>
    <property type="match status" value="1"/>
</dbReference>
<dbReference type="PANTHER" id="PTHR11735:SF6">
    <property type="entry name" value="TRNA N6-ADENOSINE THREONYLCARBAMOYLTRANSFERASE, MITOCHONDRIAL"/>
    <property type="match status" value="1"/>
</dbReference>
<dbReference type="Pfam" id="PF00814">
    <property type="entry name" value="TsaD"/>
    <property type="match status" value="1"/>
</dbReference>
<dbReference type="PRINTS" id="PR00789">
    <property type="entry name" value="OSIALOPTASE"/>
</dbReference>
<dbReference type="SUPFAM" id="SSF53067">
    <property type="entry name" value="Actin-like ATPase domain"/>
    <property type="match status" value="1"/>
</dbReference>
<dbReference type="PROSITE" id="PS01016">
    <property type="entry name" value="GLYCOPROTEASE"/>
    <property type="match status" value="1"/>
</dbReference>
<name>TSAD_YERPY</name>
<proteinExistence type="inferred from homology"/>
<reference key="1">
    <citation type="submission" date="2008-02" db="EMBL/GenBank/DDBJ databases">
        <title>Complete sequence of Yersinia pseudotuberculosis YPIII.</title>
        <authorList>
            <consortium name="US DOE Joint Genome Institute"/>
            <person name="Copeland A."/>
            <person name="Lucas S."/>
            <person name="Lapidus A."/>
            <person name="Glavina del Rio T."/>
            <person name="Dalin E."/>
            <person name="Tice H."/>
            <person name="Bruce D."/>
            <person name="Goodwin L."/>
            <person name="Pitluck S."/>
            <person name="Munk A.C."/>
            <person name="Brettin T."/>
            <person name="Detter J.C."/>
            <person name="Han C."/>
            <person name="Tapia R."/>
            <person name="Schmutz J."/>
            <person name="Larimer F."/>
            <person name="Land M."/>
            <person name="Hauser L."/>
            <person name="Challacombe J.F."/>
            <person name="Green L."/>
            <person name="Lindler L.E."/>
            <person name="Nikolich M.P."/>
            <person name="Richardson P."/>
        </authorList>
    </citation>
    <scope>NUCLEOTIDE SEQUENCE [LARGE SCALE GENOMIC DNA]</scope>
    <source>
        <strain>YPIII</strain>
    </source>
</reference>
<gene>
    <name evidence="1" type="primary">tsaD</name>
    <name type="synonym">gcp</name>
    <name type="ordered locus">YPK_0637</name>
</gene>
<protein>
    <recommendedName>
        <fullName evidence="1">tRNA N6-adenosine threonylcarbamoyltransferase</fullName>
        <ecNumber evidence="1">2.3.1.234</ecNumber>
    </recommendedName>
    <alternativeName>
        <fullName evidence="1">N6-L-threonylcarbamoyladenine synthase</fullName>
        <shortName evidence="1">t(6)A synthase</shortName>
    </alternativeName>
    <alternativeName>
        <fullName evidence="1">t(6)A37 threonylcarbamoyladenosine biosynthesis protein TsaD</fullName>
    </alternativeName>
    <alternativeName>
        <fullName evidence="1">tRNA threonylcarbamoyladenosine biosynthesis protein TsaD</fullName>
    </alternativeName>
</protein>
<organism>
    <name type="scientific">Yersinia pseudotuberculosis serotype O:3 (strain YPIII)</name>
    <dbReference type="NCBI Taxonomy" id="502800"/>
    <lineage>
        <taxon>Bacteria</taxon>
        <taxon>Pseudomonadati</taxon>
        <taxon>Pseudomonadota</taxon>
        <taxon>Gammaproteobacteria</taxon>
        <taxon>Enterobacterales</taxon>
        <taxon>Yersiniaceae</taxon>
        <taxon>Yersinia</taxon>
    </lineage>
</organism>